<proteinExistence type="inferred from homology"/>
<feature type="chain" id="PRO_1000064713" description="Ribosome maturation factor RimP">
    <location>
        <begin position="1"/>
        <end position="152"/>
    </location>
</feature>
<comment type="function">
    <text evidence="1">Required for maturation of 30S ribosomal subunits.</text>
</comment>
<comment type="subcellular location">
    <subcellularLocation>
        <location evidence="1">Cytoplasm</location>
    </subcellularLocation>
</comment>
<comment type="similarity">
    <text evidence="1">Belongs to the RimP family.</text>
</comment>
<protein>
    <recommendedName>
        <fullName evidence="1">Ribosome maturation factor RimP</fullName>
    </recommendedName>
</protein>
<organism>
    <name type="scientific">Francisella tularensis subsp. holarctica (strain OSU18)</name>
    <dbReference type="NCBI Taxonomy" id="393011"/>
    <lineage>
        <taxon>Bacteria</taxon>
        <taxon>Pseudomonadati</taxon>
        <taxon>Pseudomonadota</taxon>
        <taxon>Gammaproteobacteria</taxon>
        <taxon>Thiotrichales</taxon>
        <taxon>Francisellaceae</taxon>
        <taxon>Francisella</taxon>
    </lineage>
</organism>
<reference key="1">
    <citation type="journal article" date="2006" name="J. Bacteriol.">
        <title>Chromosome rearrangement and diversification of Francisella tularensis revealed by the type B (OSU18) genome sequence.</title>
        <authorList>
            <person name="Petrosino J.F."/>
            <person name="Xiang Q."/>
            <person name="Karpathy S.E."/>
            <person name="Jiang H."/>
            <person name="Yerrapragada S."/>
            <person name="Liu Y."/>
            <person name="Gioia J."/>
            <person name="Hemphill L."/>
            <person name="Gonzalez A."/>
            <person name="Raghavan T.M."/>
            <person name="Uzman A."/>
            <person name="Fox G.E."/>
            <person name="Highlander S."/>
            <person name="Reichard M."/>
            <person name="Morton R.J."/>
            <person name="Clinkenbeard K.D."/>
            <person name="Weinstock G.M."/>
        </authorList>
    </citation>
    <scope>NUCLEOTIDE SEQUENCE [LARGE SCALE GENOMIC DNA]</scope>
    <source>
        <strain>OSU18</strain>
    </source>
</reference>
<sequence>MKMLLDDLYEIVEPITADLGYILWGIEVVGSGKLTIRIFIDHENGVSVDDCQIVSKEISAVFDVEDPVSGKYILEVSSPGMNRQIFNIIQAQALVGFNVKAVTLAPVGSQTKFKGVLERVEGNNVILNLEDGKEISFDFDELKKLRVSPDFS</sequence>
<dbReference type="EMBL" id="CP000437">
    <property type="protein sequence ID" value="ABI83516.1"/>
    <property type="molecule type" value="Genomic_DNA"/>
</dbReference>
<dbReference type="SMR" id="Q0BK68"/>
<dbReference type="KEGG" id="fth:FTH_1748"/>
<dbReference type="GO" id="GO:0005829">
    <property type="term" value="C:cytosol"/>
    <property type="evidence" value="ECO:0007669"/>
    <property type="project" value="TreeGrafter"/>
</dbReference>
<dbReference type="GO" id="GO:0000028">
    <property type="term" value="P:ribosomal small subunit assembly"/>
    <property type="evidence" value="ECO:0007669"/>
    <property type="project" value="TreeGrafter"/>
</dbReference>
<dbReference type="GO" id="GO:0006412">
    <property type="term" value="P:translation"/>
    <property type="evidence" value="ECO:0007669"/>
    <property type="project" value="TreeGrafter"/>
</dbReference>
<dbReference type="CDD" id="cd01734">
    <property type="entry name" value="YlxS_C"/>
    <property type="match status" value="1"/>
</dbReference>
<dbReference type="FunFam" id="3.30.300.70:FF:000001">
    <property type="entry name" value="Ribosome maturation factor RimP"/>
    <property type="match status" value="1"/>
</dbReference>
<dbReference type="Gene3D" id="2.30.30.180">
    <property type="entry name" value="Ribosome maturation factor RimP, C-terminal domain"/>
    <property type="match status" value="1"/>
</dbReference>
<dbReference type="Gene3D" id="3.30.300.70">
    <property type="entry name" value="RimP-like superfamily, N-terminal"/>
    <property type="match status" value="1"/>
</dbReference>
<dbReference type="HAMAP" id="MF_01077">
    <property type="entry name" value="RimP"/>
    <property type="match status" value="1"/>
</dbReference>
<dbReference type="InterPro" id="IPR003728">
    <property type="entry name" value="Ribosome_maturation_RimP"/>
</dbReference>
<dbReference type="InterPro" id="IPR028998">
    <property type="entry name" value="RimP_C"/>
</dbReference>
<dbReference type="InterPro" id="IPR036847">
    <property type="entry name" value="RimP_C_sf"/>
</dbReference>
<dbReference type="InterPro" id="IPR028989">
    <property type="entry name" value="RimP_N"/>
</dbReference>
<dbReference type="InterPro" id="IPR035956">
    <property type="entry name" value="RimP_N_sf"/>
</dbReference>
<dbReference type="NCBIfam" id="NF011226">
    <property type="entry name" value="PRK14633.1"/>
    <property type="match status" value="1"/>
</dbReference>
<dbReference type="PANTHER" id="PTHR33867">
    <property type="entry name" value="RIBOSOME MATURATION FACTOR RIMP"/>
    <property type="match status" value="1"/>
</dbReference>
<dbReference type="PANTHER" id="PTHR33867:SF1">
    <property type="entry name" value="RIBOSOME MATURATION FACTOR RIMP"/>
    <property type="match status" value="1"/>
</dbReference>
<dbReference type="Pfam" id="PF17384">
    <property type="entry name" value="DUF150_C"/>
    <property type="match status" value="1"/>
</dbReference>
<dbReference type="Pfam" id="PF02576">
    <property type="entry name" value="RimP_N"/>
    <property type="match status" value="1"/>
</dbReference>
<dbReference type="SUPFAM" id="SSF74942">
    <property type="entry name" value="YhbC-like, C-terminal domain"/>
    <property type="match status" value="1"/>
</dbReference>
<dbReference type="SUPFAM" id="SSF75420">
    <property type="entry name" value="YhbC-like, N-terminal domain"/>
    <property type="match status" value="1"/>
</dbReference>
<gene>
    <name evidence="1" type="primary">rimP</name>
    <name type="ordered locus">FTH_1748</name>
</gene>
<keyword id="KW-0963">Cytoplasm</keyword>
<keyword id="KW-0690">Ribosome biogenesis</keyword>
<name>RIMP_FRATO</name>
<accession>Q0BK68</accession>
<evidence type="ECO:0000255" key="1">
    <source>
        <dbReference type="HAMAP-Rule" id="MF_01077"/>
    </source>
</evidence>